<keyword id="KW-0067">ATP-binding</keyword>
<keyword id="KW-0093">Biotin biosynthesis</keyword>
<keyword id="KW-0963">Cytoplasm</keyword>
<keyword id="KW-0436">Ligase</keyword>
<keyword id="KW-0460">Magnesium</keyword>
<keyword id="KW-0479">Metal-binding</keyword>
<keyword id="KW-0547">Nucleotide-binding</keyword>
<dbReference type="EC" id="6.3.3.3" evidence="1"/>
<dbReference type="EMBL" id="CP001176">
    <property type="protein sequence ID" value="ACK61810.1"/>
    <property type="molecule type" value="Genomic_DNA"/>
</dbReference>
<dbReference type="RefSeq" id="WP_000012475.1">
    <property type="nucleotide sequence ID" value="NC_011725.1"/>
</dbReference>
<dbReference type="SMR" id="B7HAZ1"/>
<dbReference type="KEGG" id="bcb:BCB4264_A4229"/>
<dbReference type="HOGENOM" id="CLU_072551_3_1_9"/>
<dbReference type="UniPathway" id="UPA00078">
    <property type="reaction ID" value="UER00161"/>
</dbReference>
<dbReference type="Proteomes" id="UP000007096">
    <property type="component" value="Chromosome"/>
</dbReference>
<dbReference type="GO" id="GO:0005829">
    <property type="term" value="C:cytosol"/>
    <property type="evidence" value="ECO:0007669"/>
    <property type="project" value="TreeGrafter"/>
</dbReference>
<dbReference type="GO" id="GO:0005524">
    <property type="term" value="F:ATP binding"/>
    <property type="evidence" value="ECO:0007669"/>
    <property type="project" value="UniProtKB-UniRule"/>
</dbReference>
<dbReference type="GO" id="GO:0004141">
    <property type="term" value="F:dethiobiotin synthase activity"/>
    <property type="evidence" value="ECO:0007669"/>
    <property type="project" value="UniProtKB-UniRule"/>
</dbReference>
<dbReference type="GO" id="GO:0000287">
    <property type="term" value="F:magnesium ion binding"/>
    <property type="evidence" value="ECO:0007669"/>
    <property type="project" value="UniProtKB-UniRule"/>
</dbReference>
<dbReference type="GO" id="GO:0009102">
    <property type="term" value="P:biotin biosynthetic process"/>
    <property type="evidence" value="ECO:0007669"/>
    <property type="project" value="UniProtKB-UniRule"/>
</dbReference>
<dbReference type="CDD" id="cd03109">
    <property type="entry name" value="DTBS"/>
    <property type="match status" value="1"/>
</dbReference>
<dbReference type="FunFam" id="3.40.50.300:FF:001212">
    <property type="entry name" value="ATP-dependent dethiobiotin synthetase BioD"/>
    <property type="match status" value="1"/>
</dbReference>
<dbReference type="Gene3D" id="3.40.50.300">
    <property type="entry name" value="P-loop containing nucleotide triphosphate hydrolases"/>
    <property type="match status" value="1"/>
</dbReference>
<dbReference type="HAMAP" id="MF_00336">
    <property type="entry name" value="BioD"/>
    <property type="match status" value="1"/>
</dbReference>
<dbReference type="InterPro" id="IPR004472">
    <property type="entry name" value="DTB_synth_BioD"/>
</dbReference>
<dbReference type="InterPro" id="IPR027417">
    <property type="entry name" value="P-loop_NTPase"/>
</dbReference>
<dbReference type="NCBIfam" id="TIGR00347">
    <property type="entry name" value="bioD"/>
    <property type="match status" value="1"/>
</dbReference>
<dbReference type="PANTHER" id="PTHR43210:SF2">
    <property type="entry name" value="ATP-DEPENDENT DETHIOBIOTIN SYNTHETASE BIOD 2"/>
    <property type="match status" value="1"/>
</dbReference>
<dbReference type="PANTHER" id="PTHR43210">
    <property type="entry name" value="DETHIOBIOTIN SYNTHETASE"/>
    <property type="match status" value="1"/>
</dbReference>
<dbReference type="Pfam" id="PF13500">
    <property type="entry name" value="AAA_26"/>
    <property type="match status" value="1"/>
</dbReference>
<dbReference type="PIRSF" id="PIRSF006755">
    <property type="entry name" value="DTB_synth"/>
    <property type="match status" value="1"/>
</dbReference>
<dbReference type="SUPFAM" id="SSF52540">
    <property type="entry name" value="P-loop containing nucleoside triphosphate hydrolases"/>
    <property type="match status" value="1"/>
</dbReference>
<accession>B7HAZ1</accession>
<evidence type="ECO:0000255" key="1">
    <source>
        <dbReference type="HAMAP-Rule" id="MF_00336"/>
    </source>
</evidence>
<reference key="1">
    <citation type="submission" date="2008-10" db="EMBL/GenBank/DDBJ databases">
        <title>Genome sequence of Bacillus cereus B4264.</title>
        <authorList>
            <person name="Dodson R.J."/>
            <person name="Durkin A.S."/>
            <person name="Rosovitz M.J."/>
            <person name="Rasko D.A."/>
            <person name="Hoffmaster A."/>
            <person name="Ravel J."/>
            <person name="Sutton G."/>
        </authorList>
    </citation>
    <scope>NUCLEOTIDE SEQUENCE [LARGE SCALE GENOMIC DNA]</scope>
    <source>
        <strain>B4264</strain>
    </source>
</reference>
<protein>
    <recommendedName>
        <fullName evidence="1">ATP-dependent dethiobiotin synthetase BioD</fullName>
        <ecNumber evidence="1">6.3.3.3</ecNumber>
    </recommendedName>
    <alternativeName>
        <fullName evidence="1">DTB synthetase</fullName>
        <shortName evidence="1">DTBS</shortName>
    </alternativeName>
    <alternativeName>
        <fullName evidence="1">Dethiobiotin synthase</fullName>
    </alternativeName>
</protein>
<sequence>MSGFFITATDTEVGKTVVAGAIAGVFRELGYNVGVYKPLQSGHVASNPEGDAARLKSLSGVPTQENEICPYSIEEPLAPRLAMKRAGRVVKLKEITDYYNGLLKEFNSLFVEGAGGLAVPYTEDALVIDFAKELQLPLIVVARPTLGTVNHTVLTIAYAKAHGLTVAGVILSGCKECEMERVKENKEMIEELSGVPVLGLLPFFAGEFTKEEVLESAKEHIMISKLEEFIQNESNVAGAPSM</sequence>
<organism>
    <name type="scientific">Bacillus cereus (strain B4264)</name>
    <dbReference type="NCBI Taxonomy" id="405532"/>
    <lineage>
        <taxon>Bacteria</taxon>
        <taxon>Bacillati</taxon>
        <taxon>Bacillota</taxon>
        <taxon>Bacilli</taxon>
        <taxon>Bacillales</taxon>
        <taxon>Bacillaceae</taxon>
        <taxon>Bacillus</taxon>
        <taxon>Bacillus cereus group</taxon>
    </lineage>
</organism>
<name>BIOD_BACC4</name>
<proteinExistence type="inferred from homology"/>
<gene>
    <name evidence="1" type="primary">bioD</name>
    <name type="ordered locus">BCB4264_A4229</name>
</gene>
<comment type="function">
    <text evidence="1">Catalyzes a mechanistically unusual reaction, the ATP-dependent insertion of CO2 between the N7 and N8 nitrogen atoms of 7,8-diaminopelargonic acid (DAPA, also called 7,8-diammoniononanoate) to form a ureido ring.</text>
</comment>
<comment type="catalytic activity">
    <reaction evidence="1">
        <text>(7R,8S)-7,8-diammoniononanoate + CO2 + ATP = (4R,5S)-dethiobiotin + ADP + phosphate + 3 H(+)</text>
        <dbReference type="Rhea" id="RHEA:15805"/>
        <dbReference type="ChEBI" id="CHEBI:15378"/>
        <dbReference type="ChEBI" id="CHEBI:16526"/>
        <dbReference type="ChEBI" id="CHEBI:30616"/>
        <dbReference type="ChEBI" id="CHEBI:43474"/>
        <dbReference type="ChEBI" id="CHEBI:149469"/>
        <dbReference type="ChEBI" id="CHEBI:149473"/>
        <dbReference type="ChEBI" id="CHEBI:456216"/>
        <dbReference type="EC" id="6.3.3.3"/>
    </reaction>
</comment>
<comment type="cofactor">
    <cofactor evidence="1">
        <name>Mg(2+)</name>
        <dbReference type="ChEBI" id="CHEBI:18420"/>
    </cofactor>
</comment>
<comment type="pathway">
    <text evidence="1">Cofactor biosynthesis; biotin biosynthesis; biotin from 7,8-diaminononanoate: step 1/2.</text>
</comment>
<comment type="subunit">
    <text evidence="1">Homodimer.</text>
</comment>
<comment type="subcellular location">
    <subcellularLocation>
        <location evidence="1">Cytoplasm</location>
    </subcellularLocation>
</comment>
<comment type="similarity">
    <text evidence="1">Belongs to the dethiobiotin synthetase family.</text>
</comment>
<feature type="chain" id="PRO_1000119858" description="ATP-dependent dethiobiotin synthetase BioD">
    <location>
        <begin position="1"/>
        <end position="242"/>
    </location>
</feature>
<feature type="active site" evidence="1">
    <location>
        <position position="37"/>
    </location>
</feature>
<feature type="binding site" evidence="1">
    <location>
        <begin position="12"/>
        <end position="17"/>
    </location>
    <ligand>
        <name>ATP</name>
        <dbReference type="ChEBI" id="CHEBI:30616"/>
    </ligand>
</feature>
<feature type="binding site" evidence="1">
    <location>
        <position position="16"/>
    </location>
    <ligand>
        <name>Mg(2+)</name>
        <dbReference type="ChEBI" id="CHEBI:18420"/>
    </ligand>
</feature>
<feature type="binding site" evidence="1">
    <location>
        <position position="41"/>
    </location>
    <ligand>
        <name>substrate</name>
    </ligand>
</feature>
<feature type="binding site" evidence="1">
    <location>
        <position position="51"/>
    </location>
    <ligand>
        <name>ATP</name>
        <dbReference type="ChEBI" id="CHEBI:30616"/>
    </ligand>
</feature>
<feature type="binding site" evidence="1">
    <location>
        <position position="51"/>
    </location>
    <ligand>
        <name>Mg(2+)</name>
        <dbReference type="ChEBI" id="CHEBI:18420"/>
    </ligand>
</feature>
<feature type="binding site" evidence="1">
    <location>
        <begin position="112"/>
        <end position="115"/>
    </location>
    <ligand>
        <name>ATP</name>
        <dbReference type="ChEBI" id="CHEBI:30616"/>
    </ligand>
</feature>
<feature type="binding site" evidence="1">
    <location>
        <position position="112"/>
    </location>
    <ligand>
        <name>Mg(2+)</name>
        <dbReference type="ChEBI" id="CHEBI:18420"/>
    </ligand>
</feature>